<organism>
    <name type="scientific">Arabidopsis thaliana</name>
    <name type="common">Mouse-ear cress</name>
    <dbReference type="NCBI Taxonomy" id="3702"/>
    <lineage>
        <taxon>Eukaryota</taxon>
        <taxon>Viridiplantae</taxon>
        <taxon>Streptophyta</taxon>
        <taxon>Embryophyta</taxon>
        <taxon>Tracheophyta</taxon>
        <taxon>Spermatophyta</taxon>
        <taxon>Magnoliopsida</taxon>
        <taxon>eudicotyledons</taxon>
        <taxon>Gunneridae</taxon>
        <taxon>Pentapetalae</taxon>
        <taxon>rosids</taxon>
        <taxon>malvids</taxon>
        <taxon>Brassicales</taxon>
        <taxon>Brassicaceae</taxon>
        <taxon>Camelineae</taxon>
        <taxon>Arabidopsis</taxon>
    </lineage>
</organism>
<feature type="chain" id="PRO_0000149061" description="Small ribosomal subunit protein eS27w">
    <location>
        <begin position="1"/>
        <end position="84"/>
    </location>
</feature>
<feature type="zinc finger region" description="C4-type" evidence="1">
    <location>
        <begin position="39"/>
        <end position="61"/>
    </location>
</feature>
<feature type="sequence conflict" description="In Ref. 4; AAM66954." evidence="4" ref="4">
    <original>P</original>
    <variation>A</variation>
    <location>
        <position position="14"/>
    </location>
</feature>
<sequence length="84" mass="9490">MVLQNDIDLLHPPPELEKRKHKLKRLVQSPNSFFMDVKCQGCFNITTVFSHSQTVVVCGNCQTVLCQPTGGKARLQEGCSFRKK</sequence>
<reference key="1">
    <citation type="journal article" date="2000" name="DNA Res.">
        <title>Structural analysis of Arabidopsis thaliana chromosome 5. X. Sequence features of the regions of 3,076,755 bp covered by sixty P1 and TAC clones.</title>
        <authorList>
            <person name="Sato S."/>
            <person name="Nakamura Y."/>
            <person name="Kaneko T."/>
            <person name="Katoh T."/>
            <person name="Asamizu E."/>
            <person name="Kotani H."/>
            <person name="Tabata S."/>
        </authorList>
    </citation>
    <scope>NUCLEOTIDE SEQUENCE [LARGE SCALE GENOMIC DNA]</scope>
    <source>
        <strain>cv. Columbia</strain>
    </source>
</reference>
<reference key="2">
    <citation type="journal article" date="2017" name="Plant J.">
        <title>Araport11: a complete reannotation of the Arabidopsis thaliana reference genome.</title>
        <authorList>
            <person name="Cheng C.Y."/>
            <person name="Krishnakumar V."/>
            <person name="Chan A.P."/>
            <person name="Thibaud-Nissen F."/>
            <person name="Schobel S."/>
            <person name="Town C.D."/>
        </authorList>
    </citation>
    <scope>GENOME REANNOTATION</scope>
    <source>
        <strain>cv. Columbia</strain>
    </source>
</reference>
<reference key="3">
    <citation type="journal article" date="2003" name="Science">
        <title>Empirical analysis of transcriptional activity in the Arabidopsis genome.</title>
        <authorList>
            <person name="Yamada K."/>
            <person name="Lim J."/>
            <person name="Dale J.M."/>
            <person name="Chen H."/>
            <person name="Shinn P."/>
            <person name="Palm C.J."/>
            <person name="Southwick A.M."/>
            <person name="Wu H.C."/>
            <person name="Kim C.J."/>
            <person name="Nguyen M."/>
            <person name="Pham P.K."/>
            <person name="Cheuk R.F."/>
            <person name="Karlin-Newmann G."/>
            <person name="Liu S.X."/>
            <person name="Lam B."/>
            <person name="Sakano H."/>
            <person name="Wu T."/>
            <person name="Yu G."/>
            <person name="Miranda M."/>
            <person name="Quach H.L."/>
            <person name="Tripp M."/>
            <person name="Chang C.H."/>
            <person name="Lee J.M."/>
            <person name="Toriumi M.J."/>
            <person name="Chan M.M."/>
            <person name="Tang C.C."/>
            <person name="Onodera C.S."/>
            <person name="Deng J.M."/>
            <person name="Akiyama K."/>
            <person name="Ansari Y."/>
            <person name="Arakawa T."/>
            <person name="Banh J."/>
            <person name="Banno F."/>
            <person name="Bowser L."/>
            <person name="Brooks S.Y."/>
            <person name="Carninci P."/>
            <person name="Chao Q."/>
            <person name="Choy N."/>
            <person name="Enju A."/>
            <person name="Goldsmith A.D."/>
            <person name="Gurjal M."/>
            <person name="Hansen N.F."/>
            <person name="Hayashizaki Y."/>
            <person name="Johnson-Hopson C."/>
            <person name="Hsuan V.W."/>
            <person name="Iida K."/>
            <person name="Karnes M."/>
            <person name="Khan S."/>
            <person name="Koesema E."/>
            <person name="Ishida J."/>
            <person name="Jiang P.X."/>
            <person name="Jones T."/>
            <person name="Kawai J."/>
            <person name="Kamiya A."/>
            <person name="Meyers C."/>
            <person name="Nakajima M."/>
            <person name="Narusaka M."/>
            <person name="Seki M."/>
            <person name="Sakurai T."/>
            <person name="Satou M."/>
            <person name="Tamse R."/>
            <person name="Vaysberg M."/>
            <person name="Wallender E.K."/>
            <person name="Wong C."/>
            <person name="Yamamura Y."/>
            <person name="Yuan S."/>
            <person name="Shinozaki K."/>
            <person name="Davis R.W."/>
            <person name="Theologis A."/>
            <person name="Ecker J.R."/>
        </authorList>
    </citation>
    <scope>NUCLEOTIDE SEQUENCE [LARGE SCALE MRNA]</scope>
    <source>
        <strain>cv. Columbia</strain>
    </source>
</reference>
<reference key="4">
    <citation type="submission" date="2002-03" db="EMBL/GenBank/DDBJ databases">
        <title>Full-length cDNA from Arabidopsis thaliana.</title>
        <authorList>
            <person name="Brover V.V."/>
            <person name="Troukhan M.E."/>
            <person name="Alexandrov N.A."/>
            <person name="Lu Y.-P."/>
            <person name="Flavell R.B."/>
            <person name="Feldmann K.A."/>
        </authorList>
    </citation>
    <scope>NUCLEOTIDE SEQUENCE [LARGE SCALE MRNA]</scope>
</reference>
<reference key="5">
    <citation type="journal article" date="1999" name="EMBO J.">
        <title>Involvement of Arabidopsis thaliana ribosomal protein S27 in mRNA degradation triggered by genotoxic stress.</title>
        <authorList>
            <person name="Revenkova E."/>
            <person name="Masson J."/>
            <person name="Koncz C."/>
            <person name="Afsar K."/>
            <person name="Jakovleva L."/>
            <person name="Paszkowski J."/>
        </authorList>
    </citation>
    <scope>IDENTIFICATION</scope>
    <scope>INDUCTION</scope>
</reference>
<reference key="6">
    <citation type="journal article" date="2001" name="Plant Physiol.">
        <title>The organization of cytoplasmic ribosomal protein genes in the Arabidopsis genome.</title>
        <authorList>
            <person name="Barakat A."/>
            <person name="Szick-Miranda K."/>
            <person name="Chang I.-F."/>
            <person name="Guyot R."/>
            <person name="Blanc G."/>
            <person name="Cooke R."/>
            <person name="Delseny M."/>
            <person name="Bailey-Serres J."/>
        </authorList>
    </citation>
    <scope>GENE FAMILY ORGANIZATION</scope>
    <scope>NOMENCLATURE</scope>
</reference>
<reference key="7">
    <citation type="journal article" date="2023" name="Plant Cell">
        <title>An updated nomenclature for plant ribosomal protein genes.</title>
        <authorList>
            <person name="Scarpin M.R."/>
            <person name="Busche M."/>
            <person name="Martinez R.E."/>
            <person name="Harper L.C."/>
            <person name="Reiser L."/>
            <person name="Szakonyi D."/>
            <person name="Merchante C."/>
            <person name="Lan T."/>
            <person name="Xiong W."/>
            <person name="Mo B."/>
            <person name="Tang G."/>
            <person name="Chen X."/>
            <person name="Bailey-Serres J."/>
            <person name="Browning K.S."/>
            <person name="Brunkard J.O."/>
        </authorList>
    </citation>
    <scope>NOMENCLATURE</scope>
</reference>
<comment type="cofactor">
    <cofactor evidence="4">
        <name>Zn(2+)</name>
        <dbReference type="ChEBI" id="CHEBI:29105"/>
    </cofactor>
    <text evidence="4">Binds 1 zinc ion per subunit.</text>
</comment>
<comment type="induction">
    <text evidence="2">Down-regulated by UV-C treatment.</text>
</comment>
<comment type="similarity">
    <text evidence="4">Belongs to the eukaryotic ribosomal protein eS27 family.</text>
</comment>
<proteinExistence type="evidence at transcript level"/>
<dbReference type="EMBL" id="AB024025">
    <property type="protein sequence ID" value="BAB09045.1"/>
    <property type="molecule type" value="Genomic_DNA"/>
</dbReference>
<dbReference type="EMBL" id="CP002688">
    <property type="protein sequence ID" value="AED95596.1"/>
    <property type="molecule type" value="Genomic_DNA"/>
</dbReference>
<dbReference type="EMBL" id="AY046032">
    <property type="protein sequence ID" value="AAK76706.1"/>
    <property type="molecule type" value="mRNA"/>
</dbReference>
<dbReference type="EMBL" id="AY079419">
    <property type="protein sequence ID" value="AAL85150.1"/>
    <property type="molecule type" value="mRNA"/>
</dbReference>
<dbReference type="EMBL" id="AY088632">
    <property type="protein sequence ID" value="AAM66954.1"/>
    <property type="molecule type" value="mRNA"/>
</dbReference>
<dbReference type="RefSeq" id="NP_199604.1">
    <property type="nucleotide sequence ID" value="NM_124167.4"/>
</dbReference>
<dbReference type="SMR" id="Q8L953"/>
<dbReference type="BioGRID" id="20092">
    <property type="interactions" value="9"/>
</dbReference>
<dbReference type="FunCoup" id="Q8L953">
    <property type="interactions" value="2618"/>
</dbReference>
<dbReference type="STRING" id="3702.Q8L953"/>
<dbReference type="iPTMnet" id="Q8L953"/>
<dbReference type="PaxDb" id="3702-AT5G47930.1"/>
<dbReference type="ProteomicsDB" id="237020"/>
<dbReference type="EnsemblPlants" id="AT5G47930.1">
    <property type="protein sequence ID" value="AT5G47930.1"/>
    <property type="gene ID" value="AT5G47930"/>
</dbReference>
<dbReference type="GeneID" id="834844"/>
<dbReference type="Gramene" id="AT5G47930.1">
    <property type="protein sequence ID" value="AT5G47930.1"/>
    <property type="gene ID" value="AT5G47930"/>
</dbReference>
<dbReference type="KEGG" id="ath:AT5G47930"/>
<dbReference type="Araport" id="AT5G47930"/>
<dbReference type="TAIR" id="AT5G47930"/>
<dbReference type="eggNOG" id="KOG1779">
    <property type="taxonomic scope" value="Eukaryota"/>
</dbReference>
<dbReference type="HOGENOM" id="CLU_130128_3_0_1"/>
<dbReference type="InParanoid" id="Q8L953"/>
<dbReference type="OMA" id="CASILCQ"/>
<dbReference type="PhylomeDB" id="Q8L953"/>
<dbReference type="PRO" id="PR:Q8L953"/>
<dbReference type="Proteomes" id="UP000006548">
    <property type="component" value="Chromosome 5"/>
</dbReference>
<dbReference type="GO" id="GO:0022626">
    <property type="term" value="C:cytosolic ribosome"/>
    <property type="evidence" value="ECO:0007005"/>
    <property type="project" value="TAIR"/>
</dbReference>
<dbReference type="GO" id="GO:0022627">
    <property type="term" value="C:cytosolic small ribosomal subunit"/>
    <property type="evidence" value="ECO:0007005"/>
    <property type="project" value="TAIR"/>
</dbReference>
<dbReference type="GO" id="GO:0009536">
    <property type="term" value="C:plastid"/>
    <property type="evidence" value="ECO:0007005"/>
    <property type="project" value="TAIR"/>
</dbReference>
<dbReference type="GO" id="GO:0003729">
    <property type="term" value="F:mRNA binding"/>
    <property type="evidence" value="ECO:0000314"/>
    <property type="project" value="TAIR"/>
</dbReference>
<dbReference type="GO" id="GO:0003735">
    <property type="term" value="F:structural constituent of ribosome"/>
    <property type="evidence" value="ECO:0000314"/>
    <property type="project" value="CAFA"/>
</dbReference>
<dbReference type="GO" id="GO:0008270">
    <property type="term" value="F:zinc ion binding"/>
    <property type="evidence" value="ECO:0007669"/>
    <property type="project" value="UniProtKB-KW"/>
</dbReference>
<dbReference type="GO" id="GO:0006412">
    <property type="term" value="P:translation"/>
    <property type="evidence" value="ECO:0007669"/>
    <property type="project" value="InterPro"/>
</dbReference>
<dbReference type="FunFam" id="2.20.25.100:FF:000001">
    <property type="entry name" value="40S ribosomal protein S27"/>
    <property type="match status" value="1"/>
</dbReference>
<dbReference type="Gene3D" id="2.20.25.100">
    <property type="entry name" value="Zn-binding ribosomal proteins"/>
    <property type="match status" value="1"/>
</dbReference>
<dbReference type="HAMAP" id="MF_00371">
    <property type="entry name" value="Ribosomal_eS27"/>
    <property type="match status" value="1"/>
</dbReference>
<dbReference type="InterPro" id="IPR000592">
    <property type="entry name" value="Ribosomal_eS27"/>
</dbReference>
<dbReference type="InterPro" id="IPR023407">
    <property type="entry name" value="Ribosomal_eS27_Zn-bd_dom_sf"/>
</dbReference>
<dbReference type="InterPro" id="IPR011332">
    <property type="entry name" value="Ribosomal_zn-bd"/>
</dbReference>
<dbReference type="PANTHER" id="PTHR11594">
    <property type="entry name" value="40S RIBOSOMAL PROTEIN S27"/>
    <property type="match status" value="1"/>
</dbReference>
<dbReference type="Pfam" id="PF01667">
    <property type="entry name" value="Ribosomal_S27e"/>
    <property type="match status" value="1"/>
</dbReference>
<dbReference type="SUPFAM" id="SSF57829">
    <property type="entry name" value="Zn-binding ribosomal proteins"/>
    <property type="match status" value="1"/>
</dbReference>
<dbReference type="PROSITE" id="PS01168">
    <property type="entry name" value="RIBOSOMAL_S27E"/>
    <property type="match status" value="1"/>
</dbReference>
<accession>Q8L953</accession>
<accession>Q9FGV6</accession>
<name>RS273_ARATH</name>
<keyword id="KW-0479">Metal-binding</keyword>
<keyword id="KW-1185">Reference proteome</keyword>
<keyword id="KW-0687">Ribonucleoprotein</keyword>
<keyword id="KW-0689">Ribosomal protein</keyword>
<keyword id="KW-0862">Zinc</keyword>
<keyword id="KW-0863">Zinc-finger</keyword>
<protein>
    <recommendedName>
        <fullName evidence="3">Small ribosomal subunit protein eS27w</fullName>
    </recommendedName>
    <alternativeName>
        <fullName>40S ribosomal protein S27-3</fullName>
    </alternativeName>
</protein>
<gene>
    <name type="primary">RPS27D</name>
    <name type="synonym">ARS27B</name>
    <name type="ordered locus">At5g47930</name>
    <name type="ORF">K16F13.1</name>
</gene>
<evidence type="ECO:0000255" key="1"/>
<evidence type="ECO:0000269" key="2">
    <source>
    </source>
</evidence>
<evidence type="ECO:0000303" key="3">
    <source>
    </source>
</evidence>
<evidence type="ECO:0000305" key="4"/>